<accession>Q9C1T1</accession>
<accession>Q2UGV7</accession>
<comment type="function">
    <text evidence="3 5">Catalyzes the phosphate monoester hydrolysis of phytic acid (myo-inositol hexakisphosphate), which results in the stepwise formation of myo-inositol pentakis-, tetrakis-, tris-, bis-, and monophosphates, as well as the liberation of inorganic phosphate (PubMed:36763800). Myo-inositol 2-monophosphate is the end product (By similarity).</text>
</comment>
<comment type="catalytic activity">
    <reaction evidence="5">
        <text>1D-myo-inositol hexakisphosphate + H2O = 1D-myo-inositol 1,2,4,5,6-pentakisphosphate + phosphate</text>
        <dbReference type="Rhea" id="RHEA:16989"/>
        <dbReference type="ChEBI" id="CHEBI:15377"/>
        <dbReference type="ChEBI" id="CHEBI:43474"/>
        <dbReference type="ChEBI" id="CHEBI:57798"/>
        <dbReference type="ChEBI" id="CHEBI:58130"/>
        <dbReference type="EC" id="3.1.3.8"/>
    </reaction>
    <physiologicalReaction direction="left-to-right" evidence="5">
        <dbReference type="Rhea" id="RHEA:16990"/>
    </physiologicalReaction>
</comment>
<comment type="catalytic activity">
    <reaction evidence="3">
        <text>1D-myo-inositol 1,2,4,5,6-pentakisphosphate + H2O = 1D-myo-inositol 1,2,5,6-tetrakisphosphate + phosphate</text>
        <dbReference type="Rhea" id="RHEA:77115"/>
        <dbReference type="ChEBI" id="CHEBI:15377"/>
        <dbReference type="ChEBI" id="CHEBI:43474"/>
        <dbReference type="ChEBI" id="CHEBI:57798"/>
        <dbReference type="ChEBI" id="CHEBI:195535"/>
    </reaction>
    <physiologicalReaction direction="left-to-right" evidence="3">
        <dbReference type="Rhea" id="RHEA:77116"/>
    </physiologicalReaction>
</comment>
<comment type="catalytic activity">
    <reaction evidence="3">
        <text>1D-myo-inositol 1,2,5,6-tetrakisphosphate + H2O = 1D-myo-inositol 1,2,6-trisphosphate + phosphate</text>
        <dbReference type="Rhea" id="RHEA:77119"/>
        <dbReference type="ChEBI" id="CHEBI:15377"/>
        <dbReference type="ChEBI" id="CHEBI:43474"/>
        <dbReference type="ChEBI" id="CHEBI:195535"/>
        <dbReference type="ChEBI" id="CHEBI:195537"/>
    </reaction>
    <physiologicalReaction direction="left-to-right" evidence="3">
        <dbReference type="Rhea" id="RHEA:77120"/>
    </physiologicalReaction>
</comment>
<comment type="catalytic activity">
    <reaction evidence="3">
        <text>1D-myo-inositol 1,2,6-trisphosphate + H2O = 1D-myo-inositol 1,2-bisphosphate + phosphate</text>
        <dbReference type="Rhea" id="RHEA:77131"/>
        <dbReference type="ChEBI" id="CHEBI:15377"/>
        <dbReference type="ChEBI" id="CHEBI:43474"/>
        <dbReference type="ChEBI" id="CHEBI:195537"/>
        <dbReference type="ChEBI" id="CHEBI:195539"/>
    </reaction>
    <physiologicalReaction direction="left-to-right" evidence="3">
        <dbReference type="Rhea" id="RHEA:77132"/>
    </physiologicalReaction>
</comment>
<comment type="catalytic activity">
    <reaction evidence="3">
        <text>1D-myo-inositol 1,2-bisphosphate + H2O = 1D-myo-inositol 2-phosphate + phosphate</text>
        <dbReference type="Rhea" id="RHEA:77135"/>
        <dbReference type="ChEBI" id="CHEBI:15377"/>
        <dbReference type="ChEBI" id="CHEBI:43474"/>
        <dbReference type="ChEBI" id="CHEBI:84142"/>
        <dbReference type="ChEBI" id="CHEBI:195539"/>
    </reaction>
    <physiologicalReaction direction="left-to-right" evidence="3">
        <dbReference type="Rhea" id="RHEA:77136"/>
    </physiologicalReaction>
</comment>
<comment type="subunit">
    <text evidence="1">Monomer.</text>
</comment>
<comment type="subcellular location">
    <subcellularLocation>
        <location evidence="8">Secreted</location>
    </subcellularLocation>
</comment>
<comment type="biotechnology">
    <text evidence="5">Phytic acid is the major storage form of phosphorus in plant seeds and, thus, in seed-based animal feed. Phytases are therefore of considerable economic interest.</text>
</comment>
<comment type="similarity">
    <text evidence="8">Belongs to the histidine acid phosphatase family.</text>
</comment>
<proteinExistence type="evidence at protein level"/>
<keyword id="KW-1015">Disulfide bond</keyword>
<keyword id="KW-0325">Glycoprotein</keyword>
<keyword id="KW-0378">Hydrolase</keyword>
<keyword id="KW-1185">Reference proteome</keyword>
<keyword id="KW-0964">Secreted</keyword>
<keyword id="KW-0732">Signal</keyword>
<feature type="signal peptide" evidence="4">
    <location>
        <begin position="1"/>
        <end position="19"/>
    </location>
</feature>
<feature type="chain" id="PRO_0000043346" description="Phytase A">
    <location>
        <begin position="20"/>
        <end position="466"/>
    </location>
</feature>
<feature type="active site" description="Nucleophile" evidence="2">
    <location>
        <position position="81"/>
    </location>
</feature>
<feature type="binding site" evidence="3">
    <location>
        <position position="49"/>
    </location>
    <ligand>
        <name>1D-myo-inositol hexakisphosphate</name>
        <dbReference type="ChEBI" id="CHEBI:58130"/>
    </ligand>
</feature>
<feature type="binding site" evidence="3">
    <location>
        <position position="50"/>
    </location>
    <ligand>
        <name>1D-myo-inositol hexakisphosphate</name>
        <dbReference type="ChEBI" id="CHEBI:58130"/>
    </ligand>
</feature>
<feature type="binding site" evidence="3">
    <location>
        <position position="80"/>
    </location>
    <ligand>
        <name>1D-myo-inositol hexakisphosphate</name>
        <dbReference type="ChEBI" id="CHEBI:58130"/>
    </ligand>
</feature>
<feature type="binding site" evidence="3">
    <location>
        <position position="81"/>
    </location>
    <ligand>
        <name>1D-myo-inositol hexakisphosphate</name>
        <dbReference type="ChEBI" id="CHEBI:58130"/>
    </ligand>
</feature>
<feature type="binding site" evidence="3">
    <location>
        <position position="84"/>
    </location>
    <ligand>
        <name>1D-myo-inositol hexakisphosphate</name>
        <dbReference type="ChEBI" id="CHEBI:58130"/>
    </ligand>
</feature>
<feature type="binding site" evidence="3">
    <location>
        <position position="87"/>
    </location>
    <ligand>
        <name>1D-myo-inositol hexakisphosphate</name>
        <dbReference type="ChEBI" id="CHEBI:58130"/>
    </ligand>
</feature>
<feature type="binding site" evidence="3">
    <location>
        <position position="164"/>
    </location>
    <ligand>
        <name>1D-myo-inositol hexakisphosphate</name>
        <dbReference type="ChEBI" id="CHEBI:58130"/>
    </ligand>
</feature>
<feature type="binding site" evidence="3">
    <location>
        <position position="300"/>
    </location>
    <ligand>
        <name>1D-myo-inositol hexakisphosphate</name>
        <dbReference type="ChEBI" id="CHEBI:58130"/>
    </ligand>
</feature>
<feature type="binding site" evidence="3">
    <location>
        <position position="360"/>
    </location>
    <ligand>
        <name>1D-myo-inositol hexakisphosphate</name>
        <dbReference type="ChEBI" id="CHEBI:58130"/>
    </ligand>
</feature>
<feature type="binding site" evidence="3">
    <location>
        <position position="361"/>
    </location>
    <ligand>
        <name>1D-myo-inositol hexakisphosphate</name>
        <dbReference type="ChEBI" id="CHEBI:58130"/>
    </ligand>
</feature>
<feature type="glycosylation site" description="N-linked (GlcNAc...) asparagine" evidence="4">
    <location>
        <position position="104"/>
    </location>
</feature>
<feature type="glycosylation site" description="N-linked (GlcNAc...) asparagine" evidence="4">
    <location>
        <position position="119"/>
    </location>
</feature>
<feature type="glycosylation site" description="N-linked (GlcNAc...) asparagine" evidence="4">
    <location>
        <position position="206"/>
    </location>
</feature>
<feature type="glycosylation site" description="N-linked (GlcNAc...) asparagine" evidence="4">
    <location>
        <position position="219"/>
    </location>
</feature>
<feature type="glycosylation site" description="N-linked (GlcNAc...) asparagine" evidence="4">
    <location>
        <position position="338"/>
    </location>
</feature>
<feature type="glycosylation site" description="N-linked (GlcNAc...) asparagine" evidence="4">
    <location>
        <position position="351"/>
    </location>
</feature>
<feature type="glycosylation site" description="N-linked (GlcNAc...) asparagine" evidence="4">
    <location>
        <position position="375"/>
    </location>
</feature>
<feature type="disulfide bond" evidence="2">
    <location>
        <begin position="30"/>
        <end position="39"/>
    </location>
</feature>
<feature type="disulfide bond" evidence="2">
    <location>
        <begin position="70"/>
        <end position="413"/>
    </location>
</feature>
<feature type="disulfide bond" evidence="2">
    <location>
        <begin position="214"/>
        <end position="464"/>
    </location>
</feature>
<feature type="disulfide bond" evidence="2">
    <location>
        <begin position="263"/>
        <end position="281"/>
    </location>
</feature>
<feature type="disulfide bond" evidence="2">
    <location>
        <begin position="435"/>
        <end position="443"/>
    </location>
</feature>
<sequence length="466" mass="51257">MAVLSVLLPITFLLSSVTGTPVTSPRQQSCNTVDEGYQCFSGVSHLWGQYSPYFSVDDESSLSEDVPDHCQVTFAQVLSRHGARYPTKSKSEKYAKLIKAVQHNATSFSGKYAFLKSYNYSLGADDLTPFGENQLVDSGIKFYQRYEELAKNVVPFIRASGSDRVIASGEKFIEGFQKAKLGDSKSKRGQPAPIVNVVITETEGFNNTLDHSLCTAFENSTTGDDAEDKFTAVFTPSIVERLEKDLPGTTLSSKEVVYLMDMCSFDTIALTRDGSRLSPFCALFTQEEWAQYDYLQSVSKYYGYGGGNPLGPAQGIGFANELIARLTKSPVKDHTTTNTTLDSNPATFPLNATLYADFSHDNTMTSVFFALGLYNTTEPLSQTSVQSTEETNGYSSARTVPFGARAYVEMMQCTDEKEPLVRVLVNDRVIPLQGCDADEYGRCKRDDFVEGLSFVTSGGNWGECFA</sequence>
<dbReference type="EC" id="3.1.3.-" evidence="3"/>
<dbReference type="EC" id="3.1.3.8" evidence="6"/>
<dbReference type="EMBL" id="AB042805">
    <property type="protein sequence ID" value="BAB40715.1"/>
    <property type="molecule type" value="mRNA"/>
</dbReference>
<dbReference type="EMBL" id="BA000051">
    <property type="protein sequence ID" value="BAE59208.1"/>
    <property type="molecule type" value="Genomic_DNA"/>
</dbReference>
<dbReference type="RefSeq" id="XP_001821210.1">
    <property type="nucleotide sequence ID" value="XM_001821158.2"/>
</dbReference>
<dbReference type="SMR" id="Q9C1T1"/>
<dbReference type="STRING" id="510516.Q9C1T1"/>
<dbReference type="GlyCosmos" id="Q9C1T1">
    <property type="glycosylation" value="7 sites, No reported glycans"/>
</dbReference>
<dbReference type="EnsemblFungi" id="BAE59208">
    <property type="protein sequence ID" value="BAE59208"/>
    <property type="gene ID" value="AO090023000692"/>
</dbReference>
<dbReference type="GeneID" id="5993212"/>
<dbReference type="KEGG" id="aor:AO090023000692"/>
<dbReference type="HOGENOM" id="CLU_020880_0_0_1"/>
<dbReference type="OrthoDB" id="43423at5052"/>
<dbReference type="Proteomes" id="UP000006564">
    <property type="component" value="Chromosome 3"/>
</dbReference>
<dbReference type="GO" id="GO:0005576">
    <property type="term" value="C:extracellular region"/>
    <property type="evidence" value="ECO:0007669"/>
    <property type="project" value="UniProtKB-SubCell"/>
</dbReference>
<dbReference type="GO" id="GO:0016158">
    <property type="term" value="F:3-phytase activity"/>
    <property type="evidence" value="ECO:0007669"/>
    <property type="project" value="UniProtKB-EC"/>
</dbReference>
<dbReference type="GO" id="GO:0003993">
    <property type="term" value="F:acid phosphatase activity"/>
    <property type="evidence" value="ECO:0007669"/>
    <property type="project" value="TreeGrafter"/>
</dbReference>
<dbReference type="CDD" id="cd07061">
    <property type="entry name" value="HP_HAP_like"/>
    <property type="match status" value="1"/>
</dbReference>
<dbReference type="FunFam" id="3.40.50.1240:FF:000027">
    <property type="entry name" value="3-phytase A"/>
    <property type="match status" value="1"/>
</dbReference>
<dbReference type="Gene3D" id="3.40.50.1240">
    <property type="entry name" value="Phosphoglycerate mutase-like"/>
    <property type="match status" value="1"/>
</dbReference>
<dbReference type="InterPro" id="IPR033379">
    <property type="entry name" value="Acid_Pase_AS"/>
</dbReference>
<dbReference type="InterPro" id="IPR000560">
    <property type="entry name" value="His_Pase_clade-2"/>
</dbReference>
<dbReference type="InterPro" id="IPR029033">
    <property type="entry name" value="His_PPase_superfam"/>
</dbReference>
<dbReference type="InterPro" id="IPR016274">
    <property type="entry name" value="Histidine_acid_Pase_euk"/>
</dbReference>
<dbReference type="PANTHER" id="PTHR20963:SF24">
    <property type="entry name" value="3-PHYTASE B"/>
    <property type="match status" value="1"/>
</dbReference>
<dbReference type="PANTHER" id="PTHR20963">
    <property type="entry name" value="MULTIPLE INOSITOL POLYPHOSPHATE PHOSPHATASE-RELATED"/>
    <property type="match status" value="1"/>
</dbReference>
<dbReference type="Pfam" id="PF00328">
    <property type="entry name" value="His_Phos_2"/>
    <property type="match status" value="1"/>
</dbReference>
<dbReference type="PIRSF" id="PIRSF000894">
    <property type="entry name" value="Acid_phosphatase"/>
    <property type="match status" value="1"/>
</dbReference>
<dbReference type="SUPFAM" id="SSF53254">
    <property type="entry name" value="Phosphoglycerate mutase-like"/>
    <property type="match status" value="1"/>
</dbReference>
<dbReference type="PROSITE" id="PS00616">
    <property type="entry name" value="HIS_ACID_PHOSPHAT_1"/>
    <property type="match status" value="1"/>
</dbReference>
<dbReference type="PROSITE" id="PS00778">
    <property type="entry name" value="HIS_ACID_PHOSPHAT_2"/>
    <property type="match status" value="1"/>
</dbReference>
<organism>
    <name type="scientific">Aspergillus oryzae (strain ATCC 42149 / RIB 40)</name>
    <name type="common">Yellow koji mold</name>
    <dbReference type="NCBI Taxonomy" id="510516"/>
    <lineage>
        <taxon>Eukaryota</taxon>
        <taxon>Fungi</taxon>
        <taxon>Dikarya</taxon>
        <taxon>Ascomycota</taxon>
        <taxon>Pezizomycotina</taxon>
        <taxon>Eurotiomycetes</taxon>
        <taxon>Eurotiomycetidae</taxon>
        <taxon>Eurotiales</taxon>
        <taxon>Aspergillaceae</taxon>
        <taxon>Aspergillus</taxon>
        <taxon>Aspergillus subgen. Circumdati</taxon>
    </lineage>
</organism>
<evidence type="ECO:0000250" key="1">
    <source>
        <dbReference type="UniProtKB" id="O00085"/>
    </source>
</evidence>
<evidence type="ECO:0000250" key="2">
    <source>
        <dbReference type="UniProtKB" id="O00092"/>
    </source>
</evidence>
<evidence type="ECO:0000250" key="3">
    <source>
        <dbReference type="UniProtKB" id="P34752"/>
    </source>
</evidence>
<evidence type="ECO:0000255" key="4"/>
<evidence type="ECO:0000269" key="5">
    <source>
    </source>
</evidence>
<evidence type="ECO:0000269" key="6">
    <source ref="1"/>
</evidence>
<evidence type="ECO:0000303" key="7">
    <source ref="1"/>
</evidence>
<evidence type="ECO:0000305" key="8"/>
<reference key="1">
    <citation type="submission" date="2000-05" db="EMBL/GenBank/DDBJ databases">
        <title>Nucleotide sequence of Aspergillus oryzae phytase cDNA.</title>
        <authorList>
            <person name="Gomi K."/>
        </authorList>
    </citation>
    <scope>NUCLEOTIDE SEQUENCE [MRNA]</scope>
</reference>
<reference key="2">
    <citation type="journal article" date="2005" name="Nature">
        <title>Genome sequencing and analysis of Aspergillus oryzae.</title>
        <authorList>
            <person name="Machida M."/>
            <person name="Asai K."/>
            <person name="Sano M."/>
            <person name="Tanaka T."/>
            <person name="Kumagai T."/>
            <person name="Terai G."/>
            <person name="Kusumoto K."/>
            <person name="Arima T."/>
            <person name="Akita O."/>
            <person name="Kashiwagi Y."/>
            <person name="Abe K."/>
            <person name="Gomi K."/>
            <person name="Horiuchi H."/>
            <person name="Kitamoto K."/>
            <person name="Kobayashi T."/>
            <person name="Takeuchi M."/>
            <person name="Denning D.W."/>
            <person name="Galagan J.E."/>
            <person name="Nierman W.C."/>
            <person name="Yu J."/>
            <person name="Archer D.B."/>
            <person name="Bennett J.W."/>
            <person name="Bhatnagar D."/>
            <person name="Cleveland T.E."/>
            <person name="Fedorova N.D."/>
            <person name="Gotoh O."/>
            <person name="Horikawa H."/>
            <person name="Hosoyama A."/>
            <person name="Ichinomiya M."/>
            <person name="Igarashi R."/>
            <person name="Iwashita K."/>
            <person name="Juvvadi P.R."/>
            <person name="Kato M."/>
            <person name="Kato Y."/>
            <person name="Kin T."/>
            <person name="Kokubun A."/>
            <person name="Maeda H."/>
            <person name="Maeyama N."/>
            <person name="Maruyama J."/>
            <person name="Nagasaki H."/>
            <person name="Nakajima T."/>
            <person name="Oda K."/>
            <person name="Okada K."/>
            <person name="Paulsen I."/>
            <person name="Sakamoto K."/>
            <person name="Sawano T."/>
            <person name="Takahashi M."/>
            <person name="Takase K."/>
            <person name="Terabayashi Y."/>
            <person name="Wortman J.R."/>
            <person name="Yamada O."/>
            <person name="Yamagata Y."/>
            <person name="Anazawa H."/>
            <person name="Hata Y."/>
            <person name="Koide Y."/>
            <person name="Komori T."/>
            <person name="Koyama Y."/>
            <person name="Minetoki T."/>
            <person name="Suharnan S."/>
            <person name="Tanaka A."/>
            <person name="Isono K."/>
            <person name="Kuhara S."/>
            <person name="Ogasawara N."/>
            <person name="Kikuchi H."/>
        </authorList>
    </citation>
    <scope>NUCLEOTIDE SEQUENCE [LARGE SCALE GENOMIC DNA]</scope>
    <source>
        <strain>ATCC 42149 / RIB 40</strain>
    </source>
</reference>
<reference key="3">
    <citation type="journal article" date="2023" name="Lett. Appl. Microbiol.">
        <title>Enhanced production and immobilization of phytase from Aspergillus oryzae: a safe and ideal food supplement for improving nutrition.</title>
        <authorList>
            <person name="Pragya A."/>
            <person name="Sharma K.K."/>
            <person name="Kumar S."/>
            <person name="Manisha P."/>
            <person name="Singh D."/>
            <person name="Kumar V."/>
            <person name="Singh B."/>
        </authorList>
    </citation>
    <scope>FUNCTION</scope>
    <scope>CATALYTIC ACTIVITY</scope>
    <scope>BIOTECHNOLOGY</scope>
</reference>
<name>PHYA_ASPOR</name>
<protein>
    <recommendedName>
        <fullName evidence="7">Phytase A</fullName>
        <ecNumber evidence="3">3.1.3.-</ecNumber>
        <ecNumber evidence="6">3.1.3.8</ecNumber>
    </recommendedName>
    <alternativeName>
        <fullName evidence="3">Histidine acid phosphatase phyA</fullName>
        <shortName evidence="3">HAP</shortName>
    </alternativeName>
    <alternativeName>
        <fullName evidence="3">Myo-inositol hexakisphosphate phosphohydrolase A</fullName>
    </alternativeName>
    <alternativeName>
        <fullName evidence="3">Myo-inositol-hexaphosphate 3-phosphohydrolase A</fullName>
    </alternativeName>
</protein>
<gene>
    <name type="primary">phyA</name>
    <name type="ORF">AO090023000692</name>
</gene>